<gene>
    <name evidence="1" type="primary">pyrH</name>
    <name type="ordered locus">LBL_0921</name>
</gene>
<organism>
    <name type="scientific">Leptospira borgpetersenii serovar Hardjo-bovis (strain L550)</name>
    <dbReference type="NCBI Taxonomy" id="355276"/>
    <lineage>
        <taxon>Bacteria</taxon>
        <taxon>Pseudomonadati</taxon>
        <taxon>Spirochaetota</taxon>
        <taxon>Spirochaetia</taxon>
        <taxon>Leptospirales</taxon>
        <taxon>Leptospiraceae</taxon>
        <taxon>Leptospira</taxon>
    </lineage>
</organism>
<name>PYRH_LEPBL</name>
<dbReference type="EC" id="2.7.4.22" evidence="1"/>
<dbReference type="EMBL" id="CP000348">
    <property type="protein sequence ID" value="ABJ78462.1"/>
    <property type="molecule type" value="Genomic_DNA"/>
</dbReference>
<dbReference type="RefSeq" id="WP_002727321.1">
    <property type="nucleotide sequence ID" value="NC_008508.1"/>
</dbReference>
<dbReference type="SMR" id="Q053N3"/>
<dbReference type="GeneID" id="61173531"/>
<dbReference type="KEGG" id="lbl:LBL_0921"/>
<dbReference type="HOGENOM" id="CLU_033861_0_0_12"/>
<dbReference type="UniPathway" id="UPA00159">
    <property type="reaction ID" value="UER00275"/>
</dbReference>
<dbReference type="GO" id="GO:0005737">
    <property type="term" value="C:cytoplasm"/>
    <property type="evidence" value="ECO:0007669"/>
    <property type="project" value="UniProtKB-SubCell"/>
</dbReference>
<dbReference type="GO" id="GO:0005524">
    <property type="term" value="F:ATP binding"/>
    <property type="evidence" value="ECO:0007669"/>
    <property type="project" value="UniProtKB-KW"/>
</dbReference>
<dbReference type="GO" id="GO:0033862">
    <property type="term" value="F:UMP kinase activity"/>
    <property type="evidence" value="ECO:0007669"/>
    <property type="project" value="UniProtKB-EC"/>
</dbReference>
<dbReference type="GO" id="GO:0044210">
    <property type="term" value="P:'de novo' CTP biosynthetic process"/>
    <property type="evidence" value="ECO:0007669"/>
    <property type="project" value="UniProtKB-UniRule"/>
</dbReference>
<dbReference type="GO" id="GO:0006225">
    <property type="term" value="P:UDP biosynthetic process"/>
    <property type="evidence" value="ECO:0007669"/>
    <property type="project" value="TreeGrafter"/>
</dbReference>
<dbReference type="CDD" id="cd04254">
    <property type="entry name" value="AAK_UMPK-PyrH-Ec"/>
    <property type="match status" value="1"/>
</dbReference>
<dbReference type="FunFam" id="3.40.1160.10:FF:000001">
    <property type="entry name" value="Uridylate kinase"/>
    <property type="match status" value="1"/>
</dbReference>
<dbReference type="Gene3D" id="3.40.1160.10">
    <property type="entry name" value="Acetylglutamate kinase-like"/>
    <property type="match status" value="1"/>
</dbReference>
<dbReference type="HAMAP" id="MF_01220_B">
    <property type="entry name" value="PyrH_B"/>
    <property type="match status" value="1"/>
</dbReference>
<dbReference type="InterPro" id="IPR036393">
    <property type="entry name" value="AceGlu_kinase-like_sf"/>
</dbReference>
<dbReference type="InterPro" id="IPR001048">
    <property type="entry name" value="Asp/Glu/Uridylate_kinase"/>
</dbReference>
<dbReference type="InterPro" id="IPR011817">
    <property type="entry name" value="Uridylate_kinase"/>
</dbReference>
<dbReference type="InterPro" id="IPR015963">
    <property type="entry name" value="Uridylate_kinase_bac"/>
</dbReference>
<dbReference type="NCBIfam" id="TIGR02075">
    <property type="entry name" value="pyrH_bact"/>
    <property type="match status" value="1"/>
</dbReference>
<dbReference type="PANTHER" id="PTHR42833">
    <property type="entry name" value="URIDYLATE KINASE"/>
    <property type="match status" value="1"/>
</dbReference>
<dbReference type="PANTHER" id="PTHR42833:SF4">
    <property type="entry name" value="URIDYLATE KINASE PUMPKIN, CHLOROPLASTIC"/>
    <property type="match status" value="1"/>
</dbReference>
<dbReference type="Pfam" id="PF00696">
    <property type="entry name" value="AA_kinase"/>
    <property type="match status" value="1"/>
</dbReference>
<dbReference type="PIRSF" id="PIRSF005650">
    <property type="entry name" value="Uridylate_kin"/>
    <property type="match status" value="1"/>
</dbReference>
<dbReference type="SUPFAM" id="SSF53633">
    <property type="entry name" value="Carbamate kinase-like"/>
    <property type="match status" value="1"/>
</dbReference>
<feature type="chain" id="PRO_0000323876" description="Uridylate kinase">
    <location>
        <begin position="1"/>
        <end position="246"/>
    </location>
</feature>
<feature type="binding site" evidence="1">
    <location>
        <begin position="11"/>
        <end position="14"/>
    </location>
    <ligand>
        <name>ATP</name>
        <dbReference type="ChEBI" id="CHEBI:30616"/>
    </ligand>
</feature>
<feature type="binding site" evidence="1">
    <location>
        <position position="53"/>
    </location>
    <ligand>
        <name>UMP</name>
        <dbReference type="ChEBI" id="CHEBI:57865"/>
    </ligand>
</feature>
<feature type="binding site" evidence="1">
    <location>
        <position position="54"/>
    </location>
    <ligand>
        <name>ATP</name>
        <dbReference type="ChEBI" id="CHEBI:30616"/>
    </ligand>
</feature>
<feature type="binding site" evidence="1">
    <location>
        <position position="58"/>
    </location>
    <ligand>
        <name>ATP</name>
        <dbReference type="ChEBI" id="CHEBI:30616"/>
    </ligand>
</feature>
<feature type="binding site" evidence="1">
    <location>
        <position position="73"/>
    </location>
    <ligand>
        <name>UMP</name>
        <dbReference type="ChEBI" id="CHEBI:57865"/>
    </ligand>
</feature>
<feature type="binding site" evidence="1">
    <location>
        <begin position="134"/>
        <end position="141"/>
    </location>
    <ligand>
        <name>UMP</name>
        <dbReference type="ChEBI" id="CHEBI:57865"/>
    </ligand>
</feature>
<feature type="binding site" evidence="1">
    <location>
        <position position="161"/>
    </location>
    <ligand>
        <name>ATP</name>
        <dbReference type="ChEBI" id="CHEBI:30616"/>
    </ligand>
</feature>
<feature type="binding site" evidence="1">
    <location>
        <position position="167"/>
    </location>
    <ligand>
        <name>ATP</name>
        <dbReference type="ChEBI" id="CHEBI:30616"/>
    </ligand>
</feature>
<feature type="binding site" evidence="1">
    <location>
        <position position="170"/>
    </location>
    <ligand>
        <name>ATP</name>
        <dbReference type="ChEBI" id="CHEBI:30616"/>
    </ligand>
</feature>
<protein>
    <recommendedName>
        <fullName evidence="1">Uridylate kinase</fullName>
        <shortName evidence="1">UK</shortName>
        <ecNumber evidence="1">2.7.4.22</ecNumber>
    </recommendedName>
    <alternativeName>
        <fullName evidence="1">Uridine monophosphate kinase</fullName>
        <shortName evidence="1">UMP kinase</shortName>
        <shortName evidence="1">UMPK</shortName>
    </alternativeName>
</protein>
<evidence type="ECO:0000255" key="1">
    <source>
        <dbReference type="HAMAP-Rule" id="MF_01220"/>
    </source>
</evidence>
<comment type="function">
    <text evidence="1">Catalyzes the reversible phosphorylation of UMP to UDP.</text>
</comment>
<comment type="catalytic activity">
    <reaction evidence="1">
        <text>UMP + ATP = UDP + ADP</text>
        <dbReference type="Rhea" id="RHEA:24400"/>
        <dbReference type="ChEBI" id="CHEBI:30616"/>
        <dbReference type="ChEBI" id="CHEBI:57865"/>
        <dbReference type="ChEBI" id="CHEBI:58223"/>
        <dbReference type="ChEBI" id="CHEBI:456216"/>
        <dbReference type="EC" id="2.7.4.22"/>
    </reaction>
</comment>
<comment type="activity regulation">
    <text evidence="1">Inhibited by UTP.</text>
</comment>
<comment type="pathway">
    <text evidence="1">Pyrimidine metabolism; CTP biosynthesis via de novo pathway; UDP from UMP (UMPK route): step 1/1.</text>
</comment>
<comment type="subunit">
    <text evidence="1">Homohexamer.</text>
</comment>
<comment type="subcellular location">
    <subcellularLocation>
        <location evidence="1">Cytoplasm</location>
    </subcellularLocation>
</comment>
<comment type="similarity">
    <text evidence="1">Belongs to the UMP kinase family.</text>
</comment>
<keyword id="KW-0067">ATP-binding</keyword>
<keyword id="KW-0963">Cytoplasm</keyword>
<keyword id="KW-0418">Kinase</keyword>
<keyword id="KW-0547">Nucleotide-binding</keyword>
<keyword id="KW-0665">Pyrimidine biosynthesis</keyword>
<keyword id="KW-0808">Transferase</keyword>
<proteinExistence type="inferred from homology"/>
<accession>Q053N3</accession>
<sequence length="246" mass="26801">MGSKYKRILIKLSGEALAGEGEFGIDTNKAHSLAEEIKEVHDLGVEIALVVGGGNIIRGTNLAKVGIDRATADYMGMLATIQNALALQDACEKKGLYTRVQSAIEINSIAESYIRRRAVRHLEKRRIVIFAGGTGNPYFTTDTTASLRAVEVGCDVILKATKVDGVYTADPKKDNGAKRYSQISFMESINRRLKVMDSTALSLCMENNMPIIVFDIFKQGNLKDLVTGKNIGTLISNSEDIQIDGK</sequence>
<reference key="1">
    <citation type="journal article" date="2006" name="Proc. Natl. Acad. Sci. U.S.A.">
        <title>Genome reduction in Leptospira borgpetersenii reflects limited transmission potential.</title>
        <authorList>
            <person name="Bulach D.M."/>
            <person name="Zuerner R.L."/>
            <person name="Wilson P."/>
            <person name="Seemann T."/>
            <person name="McGrath A."/>
            <person name="Cullen P.A."/>
            <person name="Davis J."/>
            <person name="Johnson M."/>
            <person name="Kuczek E."/>
            <person name="Alt D.P."/>
            <person name="Peterson-Burch B."/>
            <person name="Coppel R.L."/>
            <person name="Rood J.I."/>
            <person name="Davies J.K."/>
            <person name="Adler B."/>
        </authorList>
    </citation>
    <scope>NUCLEOTIDE SEQUENCE [LARGE SCALE GENOMIC DNA]</scope>
    <source>
        <strain>L550</strain>
    </source>
</reference>